<organism>
    <name type="scientific">Vibrio cholerae serotype O1 (strain ATCC 39541 / Classical Ogawa 395 / O395)</name>
    <dbReference type="NCBI Taxonomy" id="345073"/>
    <lineage>
        <taxon>Bacteria</taxon>
        <taxon>Pseudomonadati</taxon>
        <taxon>Pseudomonadota</taxon>
        <taxon>Gammaproteobacteria</taxon>
        <taxon>Vibrionales</taxon>
        <taxon>Vibrionaceae</taxon>
        <taxon>Vibrio</taxon>
    </lineage>
</organism>
<accession>A5F1N4</accession>
<accession>C3M757</accession>
<proteinExistence type="inferred from homology"/>
<dbReference type="EMBL" id="CP000626">
    <property type="protein sequence ID" value="ABQ19307.1"/>
    <property type="molecule type" value="Genomic_DNA"/>
</dbReference>
<dbReference type="EMBL" id="CP001236">
    <property type="protein sequence ID" value="ACP10853.1"/>
    <property type="molecule type" value="Genomic_DNA"/>
</dbReference>
<dbReference type="RefSeq" id="WP_000533705.1">
    <property type="nucleotide sequence ID" value="NZ_JAACZH010000003.1"/>
</dbReference>
<dbReference type="SMR" id="A5F1N4"/>
<dbReference type="KEGG" id="vco:VC0395_0124"/>
<dbReference type="KEGG" id="vcr:VC395_A0006"/>
<dbReference type="PATRIC" id="fig|345073.21.peg.2767"/>
<dbReference type="eggNOG" id="COG0217">
    <property type="taxonomic scope" value="Bacteria"/>
</dbReference>
<dbReference type="HOGENOM" id="CLU_062974_2_0_6"/>
<dbReference type="OrthoDB" id="9781053at2"/>
<dbReference type="Proteomes" id="UP000000249">
    <property type="component" value="Chromosome 1"/>
</dbReference>
<dbReference type="GO" id="GO:0005829">
    <property type="term" value="C:cytosol"/>
    <property type="evidence" value="ECO:0007669"/>
    <property type="project" value="TreeGrafter"/>
</dbReference>
<dbReference type="GO" id="GO:0003677">
    <property type="term" value="F:DNA binding"/>
    <property type="evidence" value="ECO:0007669"/>
    <property type="project" value="UniProtKB-UniRule"/>
</dbReference>
<dbReference type="GO" id="GO:0006355">
    <property type="term" value="P:regulation of DNA-templated transcription"/>
    <property type="evidence" value="ECO:0007669"/>
    <property type="project" value="UniProtKB-UniRule"/>
</dbReference>
<dbReference type="FunFam" id="3.30.70.980:FF:000025">
    <property type="entry name" value="Probable transcriptional regulatory protein VCRC385_02559"/>
    <property type="match status" value="1"/>
</dbReference>
<dbReference type="FunFam" id="1.10.10.200:FF:000003">
    <property type="entry name" value="Probable transcriptional regulatory protein YeeN"/>
    <property type="match status" value="1"/>
</dbReference>
<dbReference type="Gene3D" id="1.10.10.200">
    <property type="match status" value="1"/>
</dbReference>
<dbReference type="Gene3D" id="3.30.70.980">
    <property type="match status" value="2"/>
</dbReference>
<dbReference type="HAMAP" id="MF_00693">
    <property type="entry name" value="Transcrip_reg_TACO1"/>
    <property type="match status" value="1"/>
</dbReference>
<dbReference type="InterPro" id="IPR017856">
    <property type="entry name" value="Integrase-like_N"/>
</dbReference>
<dbReference type="InterPro" id="IPR048300">
    <property type="entry name" value="TACO1_YebC-like_2nd/3rd_dom"/>
</dbReference>
<dbReference type="InterPro" id="IPR049083">
    <property type="entry name" value="TACO1_YebC_N"/>
</dbReference>
<dbReference type="InterPro" id="IPR002876">
    <property type="entry name" value="Transcrip_reg_TACO1-like"/>
</dbReference>
<dbReference type="InterPro" id="IPR026564">
    <property type="entry name" value="Transcrip_reg_TACO1-like_dom3"/>
</dbReference>
<dbReference type="InterPro" id="IPR029072">
    <property type="entry name" value="YebC-like"/>
</dbReference>
<dbReference type="NCBIfam" id="NF009044">
    <property type="entry name" value="PRK12378.1"/>
    <property type="match status" value="1"/>
</dbReference>
<dbReference type="PANTHER" id="PTHR12532">
    <property type="entry name" value="TRANSLATIONAL ACTIVATOR OF CYTOCHROME C OXIDASE 1"/>
    <property type="match status" value="1"/>
</dbReference>
<dbReference type="PANTHER" id="PTHR12532:SF0">
    <property type="entry name" value="TRANSLATIONAL ACTIVATOR OF CYTOCHROME C OXIDASE 1"/>
    <property type="match status" value="1"/>
</dbReference>
<dbReference type="Pfam" id="PF20772">
    <property type="entry name" value="TACO1_YebC_N"/>
    <property type="match status" value="1"/>
</dbReference>
<dbReference type="Pfam" id="PF01709">
    <property type="entry name" value="Transcrip_reg"/>
    <property type="match status" value="1"/>
</dbReference>
<dbReference type="SUPFAM" id="SSF75625">
    <property type="entry name" value="YebC-like"/>
    <property type="match status" value="1"/>
</dbReference>
<evidence type="ECO:0000255" key="1">
    <source>
        <dbReference type="HAMAP-Rule" id="MF_00693"/>
    </source>
</evidence>
<feature type="chain" id="PRO_1000072758" description="Probable transcriptional regulatory protein VC0395_0124/VC395_A0006">
    <location>
        <begin position="1"/>
        <end position="239"/>
    </location>
</feature>
<sequence length="239" mass="26354">MGRSFEVRKASMAKTQGAKIKVYSKYGKEIYVCAKNGGTDPDMNLSLRHLITKAKKDQVPAHVIEKALDKASGGAGEDYQPARYEGFGPGGASVIVDCLTDNGNRTYQDVRQCFVKTGAKIGTPGVVAHMFDHQAVFQFQGDDEEAILEALMMADAEVTDIEHEDGVITVFAPNTEFFKVKTALNEAFPDLTLDVEEITFVPQNRTVVSGEDAEKFQKFLDMLDDCDDVQQVYHNADIE</sequence>
<comment type="subcellular location">
    <subcellularLocation>
        <location evidence="1">Cytoplasm</location>
    </subcellularLocation>
</comment>
<comment type="similarity">
    <text evidence="1">Belongs to the TACO1 family.</text>
</comment>
<gene>
    <name type="ordered locus">VC0395_0124</name>
    <name type="ordered locus">VC395_A0006</name>
</gene>
<name>Y124_VIBC3</name>
<keyword id="KW-0963">Cytoplasm</keyword>
<keyword id="KW-0238">DNA-binding</keyword>
<keyword id="KW-0804">Transcription</keyword>
<keyword id="KW-0805">Transcription regulation</keyword>
<reference key="1">
    <citation type="submission" date="2007-03" db="EMBL/GenBank/DDBJ databases">
        <authorList>
            <person name="Heidelberg J."/>
        </authorList>
    </citation>
    <scope>NUCLEOTIDE SEQUENCE [LARGE SCALE GENOMIC DNA]</scope>
    <source>
        <strain>ATCC 39541 / Classical Ogawa 395 / O395</strain>
    </source>
</reference>
<reference key="2">
    <citation type="journal article" date="2008" name="PLoS ONE">
        <title>A recalibrated molecular clock and independent origins for the cholera pandemic clones.</title>
        <authorList>
            <person name="Feng L."/>
            <person name="Reeves P.R."/>
            <person name="Lan R."/>
            <person name="Ren Y."/>
            <person name="Gao C."/>
            <person name="Zhou Z."/>
            <person name="Ren Y."/>
            <person name="Cheng J."/>
            <person name="Wang W."/>
            <person name="Wang J."/>
            <person name="Qian W."/>
            <person name="Li D."/>
            <person name="Wang L."/>
        </authorList>
    </citation>
    <scope>NUCLEOTIDE SEQUENCE [LARGE SCALE GENOMIC DNA]</scope>
    <source>
        <strain>ATCC 39541 / Classical Ogawa 395 / O395</strain>
    </source>
</reference>
<protein>
    <recommendedName>
        <fullName evidence="1">Probable transcriptional regulatory protein VC0395_0124/VC395_A0006</fullName>
    </recommendedName>
</protein>